<evidence type="ECO:0000255" key="1">
    <source>
        <dbReference type="HAMAP-Rule" id="MF_00011"/>
    </source>
</evidence>
<dbReference type="EC" id="6.3.4.4" evidence="1"/>
<dbReference type="EMBL" id="CP000431">
    <property type="protein sequence ID" value="ABG97331.1"/>
    <property type="molecule type" value="Genomic_DNA"/>
</dbReference>
<dbReference type="RefSeq" id="WP_005260012.1">
    <property type="nucleotide sequence ID" value="NC_008268.1"/>
</dbReference>
<dbReference type="SMR" id="Q0S555"/>
<dbReference type="KEGG" id="rha:RHA1_ro05551"/>
<dbReference type="eggNOG" id="COG0104">
    <property type="taxonomic scope" value="Bacteria"/>
</dbReference>
<dbReference type="HOGENOM" id="CLU_029848_0_0_11"/>
<dbReference type="OrthoDB" id="9807553at2"/>
<dbReference type="UniPathway" id="UPA00075">
    <property type="reaction ID" value="UER00335"/>
</dbReference>
<dbReference type="Proteomes" id="UP000008710">
    <property type="component" value="Chromosome"/>
</dbReference>
<dbReference type="GO" id="GO:0005737">
    <property type="term" value="C:cytoplasm"/>
    <property type="evidence" value="ECO:0007669"/>
    <property type="project" value="UniProtKB-SubCell"/>
</dbReference>
<dbReference type="GO" id="GO:0004019">
    <property type="term" value="F:adenylosuccinate synthase activity"/>
    <property type="evidence" value="ECO:0007669"/>
    <property type="project" value="UniProtKB-UniRule"/>
</dbReference>
<dbReference type="GO" id="GO:0005525">
    <property type="term" value="F:GTP binding"/>
    <property type="evidence" value="ECO:0007669"/>
    <property type="project" value="UniProtKB-UniRule"/>
</dbReference>
<dbReference type="GO" id="GO:0000287">
    <property type="term" value="F:magnesium ion binding"/>
    <property type="evidence" value="ECO:0007669"/>
    <property type="project" value="UniProtKB-UniRule"/>
</dbReference>
<dbReference type="GO" id="GO:0044208">
    <property type="term" value="P:'de novo' AMP biosynthetic process"/>
    <property type="evidence" value="ECO:0007669"/>
    <property type="project" value="UniProtKB-UniRule"/>
</dbReference>
<dbReference type="GO" id="GO:0046040">
    <property type="term" value="P:IMP metabolic process"/>
    <property type="evidence" value="ECO:0007669"/>
    <property type="project" value="TreeGrafter"/>
</dbReference>
<dbReference type="CDD" id="cd03108">
    <property type="entry name" value="AdSS"/>
    <property type="match status" value="1"/>
</dbReference>
<dbReference type="FunFam" id="1.10.300.10:FF:000001">
    <property type="entry name" value="Adenylosuccinate synthetase"/>
    <property type="match status" value="1"/>
</dbReference>
<dbReference type="FunFam" id="3.90.170.10:FF:000001">
    <property type="entry name" value="Adenylosuccinate synthetase"/>
    <property type="match status" value="1"/>
</dbReference>
<dbReference type="Gene3D" id="3.40.440.10">
    <property type="entry name" value="Adenylosuccinate Synthetase, subunit A, domain 1"/>
    <property type="match status" value="1"/>
</dbReference>
<dbReference type="Gene3D" id="1.10.300.10">
    <property type="entry name" value="Adenylosuccinate Synthetase, subunit A, domain 2"/>
    <property type="match status" value="1"/>
</dbReference>
<dbReference type="Gene3D" id="3.90.170.10">
    <property type="entry name" value="Adenylosuccinate Synthetase, subunit A, domain 3"/>
    <property type="match status" value="1"/>
</dbReference>
<dbReference type="HAMAP" id="MF_00011">
    <property type="entry name" value="Adenylosucc_synth"/>
    <property type="match status" value="1"/>
</dbReference>
<dbReference type="InterPro" id="IPR018220">
    <property type="entry name" value="Adenylosuccin_syn_GTP-bd"/>
</dbReference>
<dbReference type="InterPro" id="IPR033128">
    <property type="entry name" value="Adenylosuccin_syn_Lys_AS"/>
</dbReference>
<dbReference type="InterPro" id="IPR042109">
    <property type="entry name" value="Adenylosuccinate_synth_dom1"/>
</dbReference>
<dbReference type="InterPro" id="IPR042110">
    <property type="entry name" value="Adenylosuccinate_synth_dom2"/>
</dbReference>
<dbReference type="InterPro" id="IPR042111">
    <property type="entry name" value="Adenylosuccinate_synth_dom3"/>
</dbReference>
<dbReference type="InterPro" id="IPR001114">
    <property type="entry name" value="Adenylosuccinate_synthetase"/>
</dbReference>
<dbReference type="InterPro" id="IPR027417">
    <property type="entry name" value="P-loop_NTPase"/>
</dbReference>
<dbReference type="NCBIfam" id="NF002223">
    <property type="entry name" value="PRK01117.1"/>
    <property type="match status" value="1"/>
</dbReference>
<dbReference type="NCBIfam" id="TIGR00184">
    <property type="entry name" value="purA"/>
    <property type="match status" value="1"/>
</dbReference>
<dbReference type="PANTHER" id="PTHR11846">
    <property type="entry name" value="ADENYLOSUCCINATE SYNTHETASE"/>
    <property type="match status" value="1"/>
</dbReference>
<dbReference type="PANTHER" id="PTHR11846:SF0">
    <property type="entry name" value="ADENYLOSUCCINATE SYNTHETASE"/>
    <property type="match status" value="1"/>
</dbReference>
<dbReference type="Pfam" id="PF00709">
    <property type="entry name" value="Adenylsucc_synt"/>
    <property type="match status" value="1"/>
</dbReference>
<dbReference type="SMART" id="SM00788">
    <property type="entry name" value="Adenylsucc_synt"/>
    <property type="match status" value="1"/>
</dbReference>
<dbReference type="SUPFAM" id="SSF52540">
    <property type="entry name" value="P-loop containing nucleoside triphosphate hydrolases"/>
    <property type="match status" value="1"/>
</dbReference>
<dbReference type="PROSITE" id="PS01266">
    <property type="entry name" value="ADENYLOSUCCIN_SYN_1"/>
    <property type="match status" value="1"/>
</dbReference>
<dbReference type="PROSITE" id="PS00513">
    <property type="entry name" value="ADENYLOSUCCIN_SYN_2"/>
    <property type="match status" value="1"/>
</dbReference>
<name>PURA_RHOJR</name>
<gene>
    <name evidence="1" type="primary">purA</name>
    <name type="ordered locus">RHA1_ro05551</name>
</gene>
<comment type="function">
    <text evidence="1">Plays an important role in the de novo pathway of purine nucleotide biosynthesis. Catalyzes the first committed step in the biosynthesis of AMP from IMP.</text>
</comment>
<comment type="catalytic activity">
    <reaction evidence="1">
        <text>IMP + L-aspartate + GTP = N(6)-(1,2-dicarboxyethyl)-AMP + GDP + phosphate + 2 H(+)</text>
        <dbReference type="Rhea" id="RHEA:15753"/>
        <dbReference type="ChEBI" id="CHEBI:15378"/>
        <dbReference type="ChEBI" id="CHEBI:29991"/>
        <dbReference type="ChEBI" id="CHEBI:37565"/>
        <dbReference type="ChEBI" id="CHEBI:43474"/>
        <dbReference type="ChEBI" id="CHEBI:57567"/>
        <dbReference type="ChEBI" id="CHEBI:58053"/>
        <dbReference type="ChEBI" id="CHEBI:58189"/>
        <dbReference type="EC" id="6.3.4.4"/>
    </reaction>
</comment>
<comment type="cofactor">
    <cofactor evidence="1">
        <name>Mg(2+)</name>
        <dbReference type="ChEBI" id="CHEBI:18420"/>
    </cofactor>
    <text evidence="1">Binds 1 Mg(2+) ion per subunit.</text>
</comment>
<comment type="pathway">
    <text evidence="1">Purine metabolism; AMP biosynthesis via de novo pathway; AMP from IMP: step 1/2.</text>
</comment>
<comment type="subunit">
    <text evidence="1">Homodimer.</text>
</comment>
<comment type="subcellular location">
    <subcellularLocation>
        <location evidence="1">Cytoplasm</location>
    </subcellularLocation>
</comment>
<comment type="similarity">
    <text evidence="1">Belongs to the adenylosuccinate synthetase family.</text>
</comment>
<keyword id="KW-0963">Cytoplasm</keyword>
<keyword id="KW-0342">GTP-binding</keyword>
<keyword id="KW-0436">Ligase</keyword>
<keyword id="KW-0460">Magnesium</keyword>
<keyword id="KW-0479">Metal-binding</keyword>
<keyword id="KW-0547">Nucleotide-binding</keyword>
<keyword id="KW-0658">Purine biosynthesis</keyword>
<protein>
    <recommendedName>
        <fullName evidence="1">Adenylosuccinate synthetase</fullName>
        <shortName evidence="1">AMPSase</shortName>
        <shortName evidence="1">AdSS</shortName>
        <ecNumber evidence="1">6.3.4.4</ecNumber>
    </recommendedName>
    <alternativeName>
        <fullName evidence="1">IMP--aspartate ligase</fullName>
    </alternativeName>
</protein>
<organism>
    <name type="scientific">Rhodococcus jostii (strain RHA1)</name>
    <dbReference type="NCBI Taxonomy" id="101510"/>
    <lineage>
        <taxon>Bacteria</taxon>
        <taxon>Bacillati</taxon>
        <taxon>Actinomycetota</taxon>
        <taxon>Actinomycetes</taxon>
        <taxon>Mycobacteriales</taxon>
        <taxon>Nocardiaceae</taxon>
        <taxon>Rhodococcus</taxon>
    </lineage>
</organism>
<proteinExistence type="inferred from homology"/>
<feature type="chain" id="PRO_1000000911" description="Adenylosuccinate synthetase">
    <location>
        <begin position="1"/>
        <end position="429"/>
    </location>
</feature>
<feature type="active site" description="Proton acceptor" evidence="1">
    <location>
        <position position="13"/>
    </location>
</feature>
<feature type="active site" description="Proton donor" evidence="1">
    <location>
        <position position="41"/>
    </location>
</feature>
<feature type="binding site" evidence="1">
    <location>
        <begin position="12"/>
        <end position="18"/>
    </location>
    <ligand>
        <name>GTP</name>
        <dbReference type="ChEBI" id="CHEBI:37565"/>
    </ligand>
</feature>
<feature type="binding site" description="in other chain" evidence="1">
    <location>
        <begin position="13"/>
        <end position="16"/>
    </location>
    <ligand>
        <name>IMP</name>
        <dbReference type="ChEBI" id="CHEBI:58053"/>
        <note>ligand shared between dimeric partners</note>
    </ligand>
</feature>
<feature type="binding site" evidence="1">
    <location>
        <position position="13"/>
    </location>
    <ligand>
        <name>Mg(2+)</name>
        <dbReference type="ChEBI" id="CHEBI:18420"/>
    </ligand>
</feature>
<feature type="binding site" description="in other chain" evidence="1">
    <location>
        <begin position="38"/>
        <end position="41"/>
    </location>
    <ligand>
        <name>IMP</name>
        <dbReference type="ChEBI" id="CHEBI:58053"/>
        <note>ligand shared between dimeric partners</note>
    </ligand>
</feature>
<feature type="binding site" evidence="1">
    <location>
        <begin position="40"/>
        <end position="42"/>
    </location>
    <ligand>
        <name>GTP</name>
        <dbReference type="ChEBI" id="CHEBI:37565"/>
    </ligand>
</feature>
<feature type="binding site" evidence="1">
    <location>
        <position position="40"/>
    </location>
    <ligand>
        <name>Mg(2+)</name>
        <dbReference type="ChEBI" id="CHEBI:18420"/>
    </ligand>
</feature>
<feature type="binding site" description="in other chain" evidence="1">
    <location>
        <position position="129"/>
    </location>
    <ligand>
        <name>IMP</name>
        <dbReference type="ChEBI" id="CHEBI:58053"/>
        <note>ligand shared between dimeric partners</note>
    </ligand>
</feature>
<feature type="binding site" evidence="1">
    <location>
        <position position="143"/>
    </location>
    <ligand>
        <name>IMP</name>
        <dbReference type="ChEBI" id="CHEBI:58053"/>
        <note>ligand shared between dimeric partners</note>
    </ligand>
</feature>
<feature type="binding site" description="in other chain" evidence="1">
    <location>
        <position position="224"/>
    </location>
    <ligand>
        <name>IMP</name>
        <dbReference type="ChEBI" id="CHEBI:58053"/>
        <note>ligand shared between dimeric partners</note>
    </ligand>
</feature>
<feature type="binding site" description="in other chain" evidence="1">
    <location>
        <position position="239"/>
    </location>
    <ligand>
        <name>IMP</name>
        <dbReference type="ChEBI" id="CHEBI:58053"/>
        <note>ligand shared between dimeric partners</note>
    </ligand>
</feature>
<feature type="binding site" evidence="1">
    <location>
        <begin position="299"/>
        <end position="305"/>
    </location>
    <ligand>
        <name>substrate</name>
    </ligand>
</feature>
<feature type="binding site" description="in other chain" evidence="1">
    <location>
        <position position="303"/>
    </location>
    <ligand>
        <name>IMP</name>
        <dbReference type="ChEBI" id="CHEBI:58053"/>
        <note>ligand shared between dimeric partners</note>
    </ligand>
</feature>
<feature type="binding site" evidence="1">
    <location>
        <position position="305"/>
    </location>
    <ligand>
        <name>GTP</name>
        <dbReference type="ChEBI" id="CHEBI:37565"/>
    </ligand>
</feature>
<feature type="binding site" evidence="1">
    <location>
        <begin position="331"/>
        <end position="333"/>
    </location>
    <ligand>
        <name>GTP</name>
        <dbReference type="ChEBI" id="CHEBI:37565"/>
    </ligand>
</feature>
<feature type="binding site" evidence="1">
    <location>
        <begin position="413"/>
        <end position="415"/>
    </location>
    <ligand>
        <name>GTP</name>
        <dbReference type="ChEBI" id="CHEBI:37565"/>
    </ligand>
</feature>
<accession>Q0S555</accession>
<reference key="1">
    <citation type="journal article" date="2006" name="Proc. Natl. Acad. Sci. U.S.A.">
        <title>The complete genome of Rhodococcus sp. RHA1 provides insights into a catabolic powerhouse.</title>
        <authorList>
            <person name="McLeod M.P."/>
            <person name="Warren R.L."/>
            <person name="Hsiao W.W.L."/>
            <person name="Araki N."/>
            <person name="Myhre M."/>
            <person name="Fernandes C."/>
            <person name="Miyazawa D."/>
            <person name="Wong W."/>
            <person name="Lillquist A.L."/>
            <person name="Wang D."/>
            <person name="Dosanjh M."/>
            <person name="Hara H."/>
            <person name="Petrescu A."/>
            <person name="Morin R.D."/>
            <person name="Yang G."/>
            <person name="Stott J.M."/>
            <person name="Schein J.E."/>
            <person name="Shin H."/>
            <person name="Smailus D."/>
            <person name="Siddiqui A.S."/>
            <person name="Marra M.A."/>
            <person name="Jones S.J.M."/>
            <person name="Holt R."/>
            <person name="Brinkman F.S.L."/>
            <person name="Miyauchi K."/>
            <person name="Fukuda M."/>
            <person name="Davies J.E."/>
            <person name="Mohn W.W."/>
            <person name="Eltis L.D."/>
        </authorList>
    </citation>
    <scope>NUCLEOTIDE SEQUENCE [LARGE SCALE GENOMIC DNA]</scope>
    <source>
        <strain>RHA1</strain>
    </source>
</reference>
<sequence length="429" mass="46577">MPAIVLIGAQWGDEGKGKATDLLGGRLQWVVRYQGGNNAGHTVVLPNGDKFALHLIPSGILTPGVTNVIGNGVVVDPGVLLTELAGLDERGVDTSRLLLSADAHLIMPYHVAIDKVTERFLGAKKIGTTGRGIGPCYQDKLARVGVRVQDVLDEKILTQKVEAALEFKNQVLVKIYNRKALDPQQVVDEVLEQADGFKHRIADTRLQLNEALERGETVLLEGSQGTLLDVDHGTYPYVTSSNPTSGGAAVGSGIGPTKITTVLGILKAYTTRVGSGPFPTELFDQNGEYLAKTGGEVGVTTGRARRTGWFDAVIARYATRVNGITDYFLTKLDVLSSLDTIPICVGYDVDGVRYDEMPMSQTDVHHAKPIYEEMPGWWEDISHARTFEELPKNAQNYVLRLEELSGAYISCIGVGPGRDETIVRRDVVR</sequence>